<gene>
    <name evidence="1" type="primary">surE</name>
    <name type="ordered locus">SUN_1306</name>
</gene>
<name>SURE_SULNB</name>
<organism>
    <name type="scientific">Sulfurovum sp. (strain NBC37-1)</name>
    <dbReference type="NCBI Taxonomy" id="387093"/>
    <lineage>
        <taxon>Bacteria</taxon>
        <taxon>Pseudomonadati</taxon>
        <taxon>Campylobacterota</taxon>
        <taxon>Epsilonproteobacteria</taxon>
        <taxon>Campylobacterales</taxon>
        <taxon>Sulfurovaceae</taxon>
        <taxon>Sulfurovum</taxon>
    </lineage>
</organism>
<keyword id="KW-0963">Cytoplasm</keyword>
<keyword id="KW-0378">Hydrolase</keyword>
<keyword id="KW-0479">Metal-binding</keyword>
<keyword id="KW-0547">Nucleotide-binding</keyword>
<dbReference type="EC" id="3.1.3.5" evidence="1"/>
<dbReference type="EMBL" id="AP009179">
    <property type="protein sequence ID" value="BAF72259.1"/>
    <property type="molecule type" value="Genomic_DNA"/>
</dbReference>
<dbReference type="RefSeq" id="WP_011980992.1">
    <property type="nucleotide sequence ID" value="NC_009663.1"/>
</dbReference>
<dbReference type="SMR" id="A6Q9V0"/>
<dbReference type="STRING" id="387093.SUN_1306"/>
<dbReference type="KEGG" id="sun:SUN_1306"/>
<dbReference type="eggNOG" id="COG0496">
    <property type="taxonomic scope" value="Bacteria"/>
</dbReference>
<dbReference type="HOGENOM" id="CLU_045192_1_2_7"/>
<dbReference type="OrthoDB" id="9780815at2"/>
<dbReference type="Proteomes" id="UP000006378">
    <property type="component" value="Chromosome"/>
</dbReference>
<dbReference type="GO" id="GO:0005737">
    <property type="term" value="C:cytoplasm"/>
    <property type="evidence" value="ECO:0007669"/>
    <property type="project" value="UniProtKB-SubCell"/>
</dbReference>
<dbReference type="GO" id="GO:0008254">
    <property type="term" value="F:3'-nucleotidase activity"/>
    <property type="evidence" value="ECO:0007669"/>
    <property type="project" value="TreeGrafter"/>
</dbReference>
<dbReference type="GO" id="GO:0008253">
    <property type="term" value="F:5'-nucleotidase activity"/>
    <property type="evidence" value="ECO:0007669"/>
    <property type="project" value="UniProtKB-UniRule"/>
</dbReference>
<dbReference type="GO" id="GO:0004309">
    <property type="term" value="F:exopolyphosphatase activity"/>
    <property type="evidence" value="ECO:0007669"/>
    <property type="project" value="TreeGrafter"/>
</dbReference>
<dbReference type="GO" id="GO:0046872">
    <property type="term" value="F:metal ion binding"/>
    <property type="evidence" value="ECO:0007669"/>
    <property type="project" value="UniProtKB-UniRule"/>
</dbReference>
<dbReference type="GO" id="GO:0000166">
    <property type="term" value="F:nucleotide binding"/>
    <property type="evidence" value="ECO:0007669"/>
    <property type="project" value="UniProtKB-KW"/>
</dbReference>
<dbReference type="FunFam" id="3.40.1210.10:FF:000001">
    <property type="entry name" value="5'/3'-nucleotidase SurE"/>
    <property type="match status" value="1"/>
</dbReference>
<dbReference type="Gene3D" id="3.40.1210.10">
    <property type="entry name" value="Survival protein SurE-like phosphatase/nucleotidase"/>
    <property type="match status" value="1"/>
</dbReference>
<dbReference type="HAMAP" id="MF_00060">
    <property type="entry name" value="SurE"/>
    <property type="match status" value="1"/>
</dbReference>
<dbReference type="InterPro" id="IPR030048">
    <property type="entry name" value="SurE"/>
</dbReference>
<dbReference type="InterPro" id="IPR002828">
    <property type="entry name" value="SurE-like_Pase/nucleotidase"/>
</dbReference>
<dbReference type="InterPro" id="IPR036523">
    <property type="entry name" value="SurE-like_sf"/>
</dbReference>
<dbReference type="NCBIfam" id="NF001490">
    <property type="entry name" value="PRK00346.1-4"/>
    <property type="match status" value="1"/>
</dbReference>
<dbReference type="NCBIfam" id="NF001494">
    <property type="entry name" value="PRK00346.2-4"/>
    <property type="match status" value="1"/>
</dbReference>
<dbReference type="NCBIfam" id="TIGR00087">
    <property type="entry name" value="surE"/>
    <property type="match status" value="1"/>
</dbReference>
<dbReference type="PANTHER" id="PTHR30457">
    <property type="entry name" value="5'-NUCLEOTIDASE SURE"/>
    <property type="match status" value="1"/>
</dbReference>
<dbReference type="PANTHER" id="PTHR30457:SF12">
    <property type="entry name" value="5'_3'-NUCLEOTIDASE SURE"/>
    <property type="match status" value="1"/>
</dbReference>
<dbReference type="Pfam" id="PF01975">
    <property type="entry name" value="SurE"/>
    <property type="match status" value="1"/>
</dbReference>
<dbReference type="SUPFAM" id="SSF64167">
    <property type="entry name" value="SurE-like"/>
    <property type="match status" value="1"/>
</dbReference>
<proteinExistence type="inferred from homology"/>
<accession>A6Q9V0</accession>
<comment type="function">
    <text evidence="1">Nucleotidase that shows phosphatase activity on nucleoside 5'-monophosphates.</text>
</comment>
<comment type="catalytic activity">
    <reaction evidence="1">
        <text>a ribonucleoside 5'-phosphate + H2O = a ribonucleoside + phosphate</text>
        <dbReference type="Rhea" id="RHEA:12484"/>
        <dbReference type="ChEBI" id="CHEBI:15377"/>
        <dbReference type="ChEBI" id="CHEBI:18254"/>
        <dbReference type="ChEBI" id="CHEBI:43474"/>
        <dbReference type="ChEBI" id="CHEBI:58043"/>
        <dbReference type="EC" id="3.1.3.5"/>
    </reaction>
</comment>
<comment type="cofactor">
    <cofactor evidence="1">
        <name>a divalent metal cation</name>
        <dbReference type="ChEBI" id="CHEBI:60240"/>
    </cofactor>
    <text evidence="1">Binds 1 divalent metal cation per subunit.</text>
</comment>
<comment type="subcellular location">
    <subcellularLocation>
        <location evidence="1">Cytoplasm</location>
    </subcellularLocation>
</comment>
<comment type="similarity">
    <text evidence="1">Belongs to the SurE nucleotidase family.</text>
</comment>
<protein>
    <recommendedName>
        <fullName evidence="1">5'-nucleotidase SurE</fullName>
        <ecNumber evidence="1">3.1.3.5</ecNumber>
    </recommendedName>
    <alternativeName>
        <fullName evidence="1">Nucleoside 5'-monophosphate phosphohydrolase</fullName>
    </alternativeName>
</protein>
<evidence type="ECO:0000255" key="1">
    <source>
        <dbReference type="HAMAP-Rule" id="MF_00060"/>
    </source>
</evidence>
<reference key="1">
    <citation type="journal article" date="2007" name="Proc. Natl. Acad. Sci. U.S.A.">
        <title>Deep-sea vent epsilon-proteobacterial genomes provide insights into emergence of pathogens.</title>
        <authorList>
            <person name="Nakagawa S."/>
            <person name="Takaki Y."/>
            <person name="Shimamura S."/>
            <person name="Reysenbach A.-L."/>
            <person name="Takai K."/>
            <person name="Horikoshi K."/>
        </authorList>
    </citation>
    <scope>NUCLEOTIDE SEQUENCE [LARGE SCALE GENOMIC DNA]</scope>
    <source>
        <strain>NBC37-1</strain>
    </source>
</reference>
<feature type="chain" id="PRO_0000335285" description="5'-nucleotidase SurE">
    <location>
        <begin position="1"/>
        <end position="264"/>
    </location>
</feature>
<feature type="binding site" evidence="1">
    <location>
        <position position="12"/>
    </location>
    <ligand>
        <name>a divalent metal cation</name>
        <dbReference type="ChEBI" id="CHEBI:60240"/>
    </ligand>
</feature>
<feature type="binding site" evidence="1">
    <location>
        <position position="13"/>
    </location>
    <ligand>
        <name>a divalent metal cation</name>
        <dbReference type="ChEBI" id="CHEBI:60240"/>
    </ligand>
</feature>
<feature type="binding site" evidence="1">
    <location>
        <position position="43"/>
    </location>
    <ligand>
        <name>a divalent metal cation</name>
        <dbReference type="ChEBI" id="CHEBI:60240"/>
    </ligand>
</feature>
<feature type="binding site" evidence="1">
    <location>
        <position position="98"/>
    </location>
    <ligand>
        <name>a divalent metal cation</name>
        <dbReference type="ChEBI" id="CHEBI:60240"/>
    </ligand>
</feature>
<sequence>MSKRKQILVTNDDGYESEGLLALVEALKPLGDVTVVAPTTEKSACGHSLTLTRPLRFVEVSEHFYKLDDGTPTDCIFLSLTKLFANEKKPDIVISGINIGANMGEDITYSGTASAAMEAVLQGIPGIAVSQVYMNSGASIREFGYELAQQSIIKLVQKIFEGSYPLPDRKFLNVNIPPIPAAECKGFKSTRLGNKHYGFHAEVHYNPRGLEYYWIGLPRLEWMETAGHTTDFEAVKEDYISITPVQLDMTSHSDIHNLEEWLNK</sequence>